<protein>
    <recommendedName>
        <fullName evidence="1">Penicillin-binding protein activator LpoA</fullName>
        <shortName evidence="1">PBP activator LpoA</shortName>
    </recommendedName>
</protein>
<accession>A6TEG6</accession>
<keyword id="KW-0998">Cell outer membrane</keyword>
<keyword id="KW-0133">Cell shape</keyword>
<keyword id="KW-0449">Lipoprotein</keyword>
<keyword id="KW-0472">Membrane</keyword>
<keyword id="KW-0564">Palmitate</keyword>
<keyword id="KW-0573">Peptidoglycan synthesis</keyword>
<keyword id="KW-0732">Signal</keyword>
<proteinExistence type="inferred from homology"/>
<evidence type="ECO:0000255" key="1">
    <source>
        <dbReference type="HAMAP-Rule" id="MF_01890"/>
    </source>
</evidence>
<evidence type="ECO:0000256" key="2">
    <source>
        <dbReference type="SAM" id="MobiDB-lite"/>
    </source>
</evidence>
<evidence type="ECO:0000305" key="3"/>
<gene>
    <name evidence="1" type="primary">lpoA</name>
    <name type="ordered locus">KPN78578_35260</name>
    <name type="ORF">KPN_03555</name>
</gene>
<feature type="signal peptide" evidence="1">
    <location>
        <begin position="1"/>
        <end position="26"/>
    </location>
</feature>
<feature type="chain" id="PRO_0000405936" description="Penicillin-binding protein activator LpoA">
    <location>
        <begin position="27"/>
        <end position="702"/>
    </location>
</feature>
<feature type="region of interest" description="Disordered" evidence="2">
    <location>
        <begin position="327"/>
        <end position="378"/>
    </location>
</feature>
<feature type="compositionally biased region" description="Low complexity" evidence="2">
    <location>
        <begin position="330"/>
        <end position="378"/>
    </location>
</feature>
<feature type="lipid moiety-binding region" description="N-palmitoyl cysteine" evidence="1">
    <location>
        <position position="27"/>
    </location>
</feature>
<feature type="lipid moiety-binding region" description="S-diacylglycerol cysteine" evidence="1">
    <location>
        <position position="27"/>
    </location>
</feature>
<name>LPOA_KLEP7</name>
<comment type="function">
    <text evidence="1">Regulator of peptidoglycan synthesis that is essential for the function of penicillin-binding protein 1A (PBP1a).</text>
</comment>
<comment type="subunit">
    <text evidence="1">Interacts with PBP1a.</text>
</comment>
<comment type="subcellular location">
    <subcellularLocation>
        <location evidence="1">Cell outer membrane</location>
        <topology evidence="1">Lipid-anchor</topology>
        <orientation evidence="1">Periplasmic side</orientation>
    </subcellularLocation>
</comment>
<comment type="similarity">
    <text evidence="1">Belongs to the LpoA family.</text>
</comment>
<comment type="sequence caution" evidence="3">
    <conflict type="erroneous initiation">
        <sequence resource="EMBL-CDS" id="ABR78950"/>
    </conflict>
    <text>Truncated N-terminus.</text>
</comment>
<dbReference type="EMBL" id="CP000647">
    <property type="protein sequence ID" value="ABR78950.1"/>
    <property type="status" value="ALT_INIT"/>
    <property type="molecule type" value="Genomic_DNA"/>
</dbReference>
<dbReference type="RefSeq" id="WP_004185807.1">
    <property type="nucleotide sequence ID" value="NC_009648.1"/>
</dbReference>
<dbReference type="SMR" id="A6TEG6"/>
<dbReference type="STRING" id="272620.KPN_03555"/>
<dbReference type="PaxDb" id="272620-KPN_03555"/>
<dbReference type="EnsemblBacteria" id="ABR78950">
    <property type="protein sequence ID" value="ABR78950"/>
    <property type="gene ID" value="KPN_03555"/>
</dbReference>
<dbReference type="KEGG" id="kpn:KPN_03555"/>
<dbReference type="HOGENOM" id="CLU_026091_1_1_6"/>
<dbReference type="Proteomes" id="UP000000265">
    <property type="component" value="Chromosome"/>
</dbReference>
<dbReference type="GO" id="GO:0031241">
    <property type="term" value="C:periplasmic side of cell outer membrane"/>
    <property type="evidence" value="ECO:0007669"/>
    <property type="project" value="UniProtKB-UniRule"/>
</dbReference>
<dbReference type="GO" id="GO:0042597">
    <property type="term" value="C:periplasmic space"/>
    <property type="evidence" value="ECO:0007669"/>
    <property type="project" value="InterPro"/>
</dbReference>
<dbReference type="GO" id="GO:0030234">
    <property type="term" value="F:enzyme regulator activity"/>
    <property type="evidence" value="ECO:0007669"/>
    <property type="project" value="UniProtKB-UniRule"/>
</dbReference>
<dbReference type="GO" id="GO:0004553">
    <property type="term" value="F:hydrolase activity, hydrolyzing O-glycosyl compounds"/>
    <property type="evidence" value="ECO:0007669"/>
    <property type="project" value="InterPro"/>
</dbReference>
<dbReference type="GO" id="GO:0009252">
    <property type="term" value="P:peptidoglycan biosynthetic process"/>
    <property type="evidence" value="ECO:0007669"/>
    <property type="project" value="UniProtKB-UniRule"/>
</dbReference>
<dbReference type="GO" id="GO:0008360">
    <property type="term" value="P:regulation of cell shape"/>
    <property type="evidence" value="ECO:0007669"/>
    <property type="project" value="UniProtKB-KW"/>
</dbReference>
<dbReference type="CDD" id="cd06339">
    <property type="entry name" value="PBP1_YraM_LppC_lipoprotein-like"/>
    <property type="match status" value="1"/>
</dbReference>
<dbReference type="Gene3D" id="1.25.40.650">
    <property type="match status" value="1"/>
</dbReference>
<dbReference type="Gene3D" id="3.40.50.2300">
    <property type="match status" value="3"/>
</dbReference>
<dbReference type="Gene3D" id="1.25.40.10">
    <property type="entry name" value="Tetratricopeptide repeat domain"/>
    <property type="match status" value="1"/>
</dbReference>
<dbReference type="HAMAP" id="MF_01890">
    <property type="entry name" value="LpoA"/>
    <property type="match status" value="1"/>
</dbReference>
<dbReference type="InterPro" id="IPR007443">
    <property type="entry name" value="LpoA"/>
</dbReference>
<dbReference type="InterPro" id="IPR008939">
    <property type="entry name" value="Lytic_TGlycosylase_superhlx_U"/>
</dbReference>
<dbReference type="InterPro" id="IPR028082">
    <property type="entry name" value="Peripla_BP_I"/>
</dbReference>
<dbReference type="InterPro" id="IPR011990">
    <property type="entry name" value="TPR-like_helical_dom_sf"/>
</dbReference>
<dbReference type="PANTHER" id="PTHR38038">
    <property type="entry name" value="PENICILLIN-BINDING PROTEIN ACTIVATOR LPOA"/>
    <property type="match status" value="1"/>
</dbReference>
<dbReference type="PANTHER" id="PTHR38038:SF1">
    <property type="entry name" value="PENICILLIN-BINDING PROTEIN ACTIVATOR LPOA"/>
    <property type="match status" value="1"/>
</dbReference>
<dbReference type="Pfam" id="PF04348">
    <property type="entry name" value="LppC"/>
    <property type="match status" value="2"/>
</dbReference>
<dbReference type="SUPFAM" id="SSF48435">
    <property type="entry name" value="Bacterial muramidases"/>
    <property type="match status" value="1"/>
</dbReference>
<dbReference type="SUPFAM" id="SSF53822">
    <property type="entry name" value="Periplasmic binding protein-like I"/>
    <property type="match status" value="1"/>
</dbReference>
<organism>
    <name type="scientific">Klebsiella pneumoniae subsp. pneumoniae (strain ATCC 700721 / MGH 78578)</name>
    <dbReference type="NCBI Taxonomy" id="272620"/>
    <lineage>
        <taxon>Bacteria</taxon>
        <taxon>Pseudomonadati</taxon>
        <taxon>Pseudomonadota</taxon>
        <taxon>Gammaproteobacteria</taxon>
        <taxon>Enterobacterales</taxon>
        <taxon>Enterobacteriaceae</taxon>
        <taxon>Klebsiella/Raoultella group</taxon>
        <taxon>Klebsiella</taxon>
        <taxon>Klebsiella pneumoniae complex</taxon>
    </lineage>
</organism>
<sequence length="702" mass="75084">MVPSTFLRSKPARCLPVLLATLIFAGCGTHTQDQSAAFMQGTSQANSSFYLQQMQQSTNDSKTNWQLLAIRALLQEGKKQQAIDLFNQLPANLNSTQAREQSLLAVEVKLAQNDYQAARNLLAKIDPTNLEQPQQARYWQAQIDASQGKPSLTLLRALIAQQPLLSDAKQRQKNIDATWQALTSMPQDQANALVINADENILQGWLDLQRMWFDNRNDPTLLKAGVKDWQTRYPQNPGAKMLPTALVNMQNYKPASINKIALFLPLNGQASIFGRTIQQGFEAAKNGAPSVTGSAVPAQVAQAANVSGNDDVVSPSQAEISDLTATGSRADPVQAPTQDQAAPAAEPAAQAPATSTTPQTTASPATQPVTAPAAQPQPVVATAANPSAELKIYDTTTQPISQLLAQAQQDGATLVVGPLLKENVEEVIKSNTPLNVLALNQPEKVESRANLCYFALSPEDEARDAARHIHQQGKQTPLLLVPRGALGDRVVSAFADEWLKLGGASVLQQRFGSTAELRAGVNGGGGIALSGTPVSTLPSAQNSILGSADEMPVSSGGSVDAAYILATPEQIAYIKPMIAMRNGSQSNVTLYASSRSAQGTAGPDFRLEMEGLQYSEIPMLAGSNPSLMQQALSAVRNDYSLARLYAMGADAWSLANHFTQMRQTPGFELNGNTGDLTANQDCVINRKLSWLKYQQGKIVPAS</sequence>
<reference key="1">
    <citation type="submission" date="2006-09" db="EMBL/GenBank/DDBJ databases">
        <authorList>
            <consortium name="The Klebsiella pneumonia Genome Sequencing Project"/>
            <person name="McClelland M."/>
            <person name="Sanderson E.K."/>
            <person name="Spieth J."/>
            <person name="Clifton W.S."/>
            <person name="Latreille P."/>
            <person name="Sabo A."/>
            <person name="Pepin K."/>
            <person name="Bhonagiri V."/>
            <person name="Porwollik S."/>
            <person name="Ali J."/>
            <person name="Wilson R.K."/>
        </authorList>
    </citation>
    <scope>NUCLEOTIDE SEQUENCE [LARGE SCALE GENOMIC DNA]</scope>
    <source>
        <strain>ATCC 700721 / MGH 78578</strain>
    </source>
</reference>